<evidence type="ECO:0000250" key="1"/>
<evidence type="ECO:0000256" key="2">
    <source>
        <dbReference type="SAM" id="MobiDB-lite"/>
    </source>
</evidence>
<evidence type="ECO:0000305" key="3"/>
<sequence length="474" mass="52677">MLRFYHWRFPPSLAVVRMLSSPPPPHSHSPFSGGGVNSNSVGGNSKPELQFPQSQPHKLSSSPSSSLKSTVACSNAGAIRRSMATVSQAFSERTESIDSDLGSLVVVSFYKFADFPEHADFRKPLKDLCEKLRVSGGIILAPEGINGSICGIRESVEEVLAFIQRDVRLNGLRQVETPVSPEQEAIHHGHSSSSPLAAGEDAPFRWDHVRVKLKKEIVTLGIPSVSPIERVGTYVSPEEWNELISDPETVVIDVRNTYETRIGKFKGAVDPCTTAFRNFPSWVENQFALKQEGNETQAKVEKEDFSEITHKEDKAEKPKTLPRIAMYCTGGIRCEKASSLLLSQGFEEVYHLKGGILKYLEEVPKTESLWEGECFVFDKRVSVEHGLAQGTHKLCYGCKQPISDEDMEAPEYEYGVSCPYCYSKKSEEEKERARARQTQFEEWGVIGGPDKGRRPATKPDSPRKKINAKLGSSI</sequence>
<keyword id="KW-1185">Reference proteome</keyword>
<gene>
    <name type="primary">STR7</name>
    <name type="ordered locus">At2g40760</name>
    <name type="ORF">T7D17.1</name>
</gene>
<organism>
    <name type="scientific">Arabidopsis thaliana</name>
    <name type="common">Mouse-ear cress</name>
    <dbReference type="NCBI Taxonomy" id="3702"/>
    <lineage>
        <taxon>Eukaryota</taxon>
        <taxon>Viridiplantae</taxon>
        <taxon>Streptophyta</taxon>
        <taxon>Embryophyta</taxon>
        <taxon>Tracheophyta</taxon>
        <taxon>Spermatophyta</taxon>
        <taxon>Magnoliopsida</taxon>
        <taxon>eudicotyledons</taxon>
        <taxon>Gunneridae</taxon>
        <taxon>Pentapetalae</taxon>
        <taxon>rosids</taxon>
        <taxon>malvids</taxon>
        <taxon>Brassicales</taxon>
        <taxon>Brassicaceae</taxon>
        <taxon>Camelineae</taxon>
        <taxon>Arabidopsis</taxon>
    </lineage>
</organism>
<protein>
    <recommendedName>
        <fullName>Rhodanese-like domain-containing protein 7</fullName>
    </recommendedName>
    <alternativeName>
        <fullName>Sulfurtransferase 7</fullName>
        <shortName>AtStr7</shortName>
    </alternativeName>
</protein>
<accession>Q1JPN0</accession>
<accession>Q56W89</accession>
<proteinExistence type="evidence at transcript level"/>
<feature type="chain" id="PRO_0000416529" description="Rhodanese-like domain-containing protein 7">
    <location>
        <begin position="1"/>
        <end position="474"/>
    </location>
</feature>
<feature type="domain" description="Rhodanese">
    <location>
        <begin position="245"/>
        <end position="368"/>
    </location>
</feature>
<feature type="region of interest" description="Disordered" evidence="2">
    <location>
        <begin position="20"/>
        <end position="68"/>
    </location>
</feature>
<feature type="region of interest" description="Disordered" evidence="2">
    <location>
        <begin position="179"/>
        <end position="198"/>
    </location>
</feature>
<feature type="region of interest" description="Disordered" evidence="2">
    <location>
        <begin position="432"/>
        <end position="474"/>
    </location>
</feature>
<feature type="compositionally biased region" description="Low complexity" evidence="2">
    <location>
        <begin position="53"/>
        <end position="68"/>
    </location>
</feature>
<feature type="active site" description="Cysteine persulfide intermediate" evidence="1">
    <location>
        <position position="328"/>
    </location>
</feature>
<dbReference type="EMBL" id="CP002685">
    <property type="protein sequence ID" value="AEC09874.1"/>
    <property type="molecule type" value="Genomic_DNA"/>
</dbReference>
<dbReference type="EMBL" id="AK222157">
    <property type="protein sequence ID" value="BAD95247.1"/>
    <property type="status" value="ALT_INIT"/>
    <property type="molecule type" value="mRNA"/>
</dbReference>
<dbReference type="EMBL" id="BT025323">
    <property type="protein sequence ID" value="ABF57279.1"/>
    <property type="molecule type" value="mRNA"/>
</dbReference>
<dbReference type="RefSeq" id="NP_565940.1">
    <property type="nucleotide sequence ID" value="NM_129638.4"/>
</dbReference>
<dbReference type="SMR" id="Q1JPN0"/>
<dbReference type="FunCoup" id="Q1JPN0">
    <property type="interactions" value="541"/>
</dbReference>
<dbReference type="STRING" id="3702.Q1JPN0"/>
<dbReference type="iPTMnet" id="Q1JPN0"/>
<dbReference type="PaxDb" id="3702-AT2G40760.1"/>
<dbReference type="ProteomicsDB" id="228431"/>
<dbReference type="EnsemblPlants" id="AT2G40760.1">
    <property type="protein sequence ID" value="AT2G40760.1"/>
    <property type="gene ID" value="AT2G40760"/>
</dbReference>
<dbReference type="GeneID" id="818672"/>
<dbReference type="Gramene" id="AT2G40760.1">
    <property type="protein sequence ID" value="AT2G40760.1"/>
    <property type="gene ID" value="AT2G40760"/>
</dbReference>
<dbReference type="KEGG" id="ath:AT2G40760"/>
<dbReference type="Araport" id="AT2G40760"/>
<dbReference type="TAIR" id="AT2G40760"/>
<dbReference type="eggNOG" id="ENOG502QW8R">
    <property type="taxonomic scope" value="Eukaryota"/>
</dbReference>
<dbReference type="HOGENOM" id="CLU_038878_2_2_1"/>
<dbReference type="InParanoid" id="Q1JPN0"/>
<dbReference type="OMA" id="PPHGRGF"/>
<dbReference type="PhylomeDB" id="Q1JPN0"/>
<dbReference type="PRO" id="PR:Q1JPN0"/>
<dbReference type="Proteomes" id="UP000006548">
    <property type="component" value="Chromosome 2"/>
</dbReference>
<dbReference type="ExpressionAtlas" id="Q1JPN0">
    <property type="expression patterns" value="baseline and differential"/>
</dbReference>
<dbReference type="CDD" id="cd01518">
    <property type="entry name" value="RHOD_YceA"/>
    <property type="match status" value="1"/>
</dbReference>
<dbReference type="Gene3D" id="3.30.70.100">
    <property type="match status" value="1"/>
</dbReference>
<dbReference type="Gene3D" id="3.40.250.10">
    <property type="entry name" value="Rhodanese-like domain"/>
    <property type="match status" value="1"/>
</dbReference>
<dbReference type="HAMAP" id="MF_00469">
    <property type="entry name" value="TrhO"/>
    <property type="match status" value="1"/>
</dbReference>
<dbReference type="InterPro" id="IPR001763">
    <property type="entry name" value="Rhodanese-like_dom"/>
</dbReference>
<dbReference type="InterPro" id="IPR036873">
    <property type="entry name" value="Rhodanese-like_dom_sf"/>
</dbReference>
<dbReference type="InterPro" id="IPR020936">
    <property type="entry name" value="TrhO"/>
</dbReference>
<dbReference type="InterPro" id="IPR040503">
    <property type="entry name" value="TRHO_N"/>
</dbReference>
<dbReference type="PANTHER" id="PTHR43268:SF3">
    <property type="entry name" value="RHODANESE-LIKE DOMAIN-CONTAINING PROTEIN 7-RELATED"/>
    <property type="match status" value="1"/>
</dbReference>
<dbReference type="PANTHER" id="PTHR43268">
    <property type="entry name" value="THIOSULFATE SULFURTRANSFERASE/RHODANESE-LIKE DOMAIN-CONTAINING PROTEIN 2"/>
    <property type="match status" value="1"/>
</dbReference>
<dbReference type="Pfam" id="PF00581">
    <property type="entry name" value="Rhodanese"/>
    <property type="match status" value="1"/>
</dbReference>
<dbReference type="Pfam" id="PF17773">
    <property type="entry name" value="UPF0176_N"/>
    <property type="match status" value="1"/>
</dbReference>
<dbReference type="SMART" id="SM00450">
    <property type="entry name" value="RHOD"/>
    <property type="match status" value="1"/>
</dbReference>
<dbReference type="SUPFAM" id="SSF52821">
    <property type="entry name" value="Rhodanese/Cell cycle control phosphatase"/>
    <property type="match status" value="1"/>
</dbReference>
<dbReference type="PROSITE" id="PS50206">
    <property type="entry name" value="RHODANESE_3"/>
    <property type="match status" value="1"/>
</dbReference>
<name>STR7_ARATH</name>
<reference key="1">
    <citation type="journal article" date="1999" name="Nature">
        <title>Sequence and analysis of chromosome 2 of the plant Arabidopsis thaliana.</title>
        <authorList>
            <person name="Lin X."/>
            <person name="Kaul S."/>
            <person name="Rounsley S.D."/>
            <person name="Shea T.P."/>
            <person name="Benito M.-I."/>
            <person name="Town C.D."/>
            <person name="Fujii C.Y."/>
            <person name="Mason T.M."/>
            <person name="Bowman C.L."/>
            <person name="Barnstead M.E."/>
            <person name="Feldblyum T.V."/>
            <person name="Buell C.R."/>
            <person name="Ketchum K.A."/>
            <person name="Lee J.J."/>
            <person name="Ronning C.M."/>
            <person name="Koo H.L."/>
            <person name="Moffat K.S."/>
            <person name="Cronin L.A."/>
            <person name="Shen M."/>
            <person name="Pai G."/>
            <person name="Van Aken S."/>
            <person name="Umayam L."/>
            <person name="Tallon L.J."/>
            <person name="Gill J.E."/>
            <person name="Adams M.D."/>
            <person name="Carrera A.J."/>
            <person name="Creasy T.H."/>
            <person name="Goodman H.M."/>
            <person name="Somerville C.R."/>
            <person name="Copenhaver G.P."/>
            <person name="Preuss D."/>
            <person name="Nierman W.C."/>
            <person name="White O."/>
            <person name="Eisen J.A."/>
            <person name="Salzberg S.L."/>
            <person name="Fraser C.M."/>
            <person name="Venter J.C."/>
        </authorList>
    </citation>
    <scope>NUCLEOTIDE SEQUENCE [LARGE SCALE GENOMIC DNA]</scope>
    <source>
        <strain>cv. Columbia</strain>
    </source>
</reference>
<reference key="2">
    <citation type="journal article" date="2017" name="Plant J.">
        <title>Araport11: a complete reannotation of the Arabidopsis thaliana reference genome.</title>
        <authorList>
            <person name="Cheng C.Y."/>
            <person name="Krishnakumar V."/>
            <person name="Chan A.P."/>
            <person name="Thibaud-Nissen F."/>
            <person name="Schobel S."/>
            <person name="Town C.D."/>
        </authorList>
    </citation>
    <scope>GENOME REANNOTATION</scope>
    <source>
        <strain>cv. Columbia</strain>
    </source>
</reference>
<reference key="3">
    <citation type="submission" date="2006-05" db="EMBL/GenBank/DDBJ databases">
        <title>Arabidopsis ORF clones.</title>
        <authorList>
            <person name="Shinn P."/>
            <person name="Chen H."/>
            <person name="Kim C.J."/>
            <person name="Quinitio C."/>
            <person name="Ecker J.R."/>
        </authorList>
    </citation>
    <scope>NUCLEOTIDE SEQUENCE [LARGE SCALE MRNA]</scope>
    <source>
        <strain>cv. Columbia</strain>
    </source>
</reference>
<reference key="4">
    <citation type="submission" date="2005-03" db="EMBL/GenBank/DDBJ databases">
        <title>Large-scale analysis of RIKEN Arabidopsis full-length (RAFL) cDNAs.</title>
        <authorList>
            <person name="Totoki Y."/>
            <person name="Seki M."/>
            <person name="Ishida J."/>
            <person name="Nakajima M."/>
            <person name="Enju A."/>
            <person name="Kamiya A."/>
            <person name="Narusaka M."/>
            <person name="Shin-i T."/>
            <person name="Nakagawa M."/>
            <person name="Sakamoto N."/>
            <person name="Oishi K."/>
            <person name="Kohara Y."/>
            <person name="Kobayashi M."/>
            <person name="Toyoda A."/>
            <person name="Sakaki Y."/>
            <person name="Sakurai T."/>
            <person name="Iida K."/>
            <person name="Akiyama K."/>
            <person name="Satou M."/>
            <person name="Toyoda T."/>
            <person name="Konagaya A."/>
            <person name="Carninci P."/>
            <person name="Kawai J."/>
            <person name="Hayashizaki Y."/>
            <person name="Shinozaki K."/>
        </authorList>
    </citation>
    <scope>NUCLEOTIDE SEQUENCE [LARGE SCALE MRNA] OF 8-474</scope>
    <source>
        <strain>cv. Columbia</strain>
    </source>
</reference>
<reference key="5">
    <citation type="journal article" date="2007" name="Plant Physiol. Biochem.">
        <title>Differential expression of Arabidopsis sulfurtransferases under various growth conditions.</title>
        <authorList>
            <person name="Bartels A."/>
            <person name="Mock H.P."/>
            <person name="Papenbrock J."/>
        </authorList>
    </citation>
    <scope>GENE FAMILY</scope>
    <scope>NOMENCLATURE</scope>
</reference>
<comment type="sequence caution" evidence="3">
    <conflict type="erroneous initiation">
        <sequence resource="EMBL-CDS" id="BAD95247"/>
    </conflict>
    <text>Truncated N-terminus.</text>
</comment>